<proteinExistence type="inferred from homology"/>
<protein>
    <recommendedName>
        <fullName evidence="1">Cytoplasmic tRNA 2-thiolation protein 1</fullName>
        <ecNumber evidence="1">2.7.7.-</ecNumber>
    </recommendedName>
    <alternativeName>
        <fullName evidence="1">Cytoplasmic tRNA adenylyltransferase 1</fullName>
    </alternativeName>
</protein>
<accession>B4P3W7</accession>
<reference key="1">
    <citation type="journal article" date="2007" name="Nature">
        <title>Evolution of genes and genomes on the Drosophila phylogeny.</title>
        <authorList>
            <consortium name="Drosophila 12 genomes consortium"/>
        </authorList>
    </citation>
    <scope>NUCLEOTIDE SEQUENCE [LARGE SCALE GENOMIC DNA]</scope>
    <source>
        <strain>Tai18E2 / Tucson 14021-0261.01</strain>
    </source>
</reference>
<dbReference type="EC" id="2.7.7.-" evidence="1"/>
<dbReference type="EMBL" id="CM000157">
    <property type="protein sequence ID" value="EDW89450.1"/>
    <property type="molecule type" value="Genomic_DNA"/>
</dbReference>
<dbReference type="SMR" id="B4P3W7"/>
<dbReference type="EnsemblMetazoa" id="FBtr0269094">
    <property type="protein sequence ID" value="FBpp0267586"/>
    <property type="gene ID" value="FBgn0239795"/>
</dbReference>
<dbReference type="EnsemblMetazoa" id="XM_002089702.3">
    <property type="protein sequence ID" value="XP_002089738.1"/>
    <property type="gene ID" value="LOC6528703"/>
</dbReference>
<dbReference type="GeneID" id="6528703"/>
<dbReference type="KEGG" id="dya:Dyak_GE22576"/>
<dbReference type="CTD" id="90353"/>
<dbReference type="eggNOG" id="KOG2840">
    <property type="taxonomic scope" value="Eukaryota"/>
</dbReference>
<dbReference type="HOGENOM" id="CLU_026481_1_2_1"/>
<dbReference type="OMA" id="KPVRGIC"/>
<dbReference type="OrthoDB" id="198857at2759"/>
<dbReference type="PhylomeDB" id="B4P3W7"/>
<dbReference type="UniPathway" id="UPA00988"/>
<dbReference type="Proteomes" id="UP000002282">
    <property type="component" value="Chromosome 2L"/>
</dbReference>
<dbReference type="GO" id="GO:0005829">
    <property type="term" value="C:cytosol"/>
    <property type="evidence" value="ECO:0000250"/>
    <property type="project" value="UniProtKB"/>
</dbReference>
<dbReference type="GO" id="GO:0002144">
    <property type="term" value="C:cytosolic tRNA wobble base thiouridylase complex"/>
    <property type="evidence" value="ECO:0007669"/>
    <property type="project" value="TreeGrafter"/>
</dbReference>
<dbReference type="GO" id="GO:0005739">
    <property type="term" value="C:mitochondrion"/>
    <property type="evidence" value="ECO:0007669"/>
    <property type="project" value="TreeGrafter"/>
</dbReference>
<dbReference type="GO" id="GO:0016779">
    <property type="term" value="F:nucleotidyltransferase activity"/>
    <property type="evidence" value="ECO:0007669"/>
    <property type="project" value="UniProtKB-UniRule"/>
</dbReference>
<dbReference type="GO" id="GO:0000049">
    <property type="term" value="F:tRNA binding"/>
    <property type="evidence" value="ECO:0000250"/>
    <property type="project" value="UniProtKB"/>
</dbReference>
<dbReference type="GO" id="GO:0032447">
    <property type="term" value="P:protein urmylation"/>
    <property type="evidence" value="ECO:0007669"/>
    <property type="project" value="UniProtKB-UniRule"/>
</dbReference>
<dbReference type="GO" id="GO:0034227">
    <property type="term" value="P:tRNA thio-modification"/>
    <property type="evidence" value="ECO:0000250"/>
    <property type="project" value="UniProtKB"/>
</dbReference>
<dbReference type="GO" id="GO:0002143">
    <property type="term" value="P:tRNA wobble position uridine thiolation"/>
    <property type="evidence" value="ECO:0007669"/>
    <property type="project" value="TreeGrafter"/>
</dbReference>
<dbReference type="GO" id="GO:0002098">
    <property type="term" value="P:tRNA wobble uridine modification"/>
    <property type="evidence" value="ECO:0000250"/>
    <property type="project" value="UniProtKB"/>
</dbReference>
<dbReference type="CDD" id="cd01713">
    <property type="entry name" value="CTU1-like"/>
    <property type="match status" value="1"/>
</dbReference>
<dbReference type="FunFam" id="3.40.50.620:FF:000054">
    <property type="entry name" value="Cytoplasmic tRNA 2-thiolation protein 1"/>
    <property type="match status" value="1"/>
</dbReference>
<dbReference type="Gene3D" id="3.40.50.620">
    <property type="entry name" value="HUPs"/>
    <property type="match status" value="1"/>
</dbReference>
<dbReference type="HAMAP" id="MF_03053">
    <property type="entry name" value="CTU1"/>
    <property type="match status" value="1"/>
</dbReference>
<dbReference type="InterPro" id="IPR056369">
    <property type="entry name" value="CTU1-like_ATP-bd"/>
</dbReference>
<dbReference type="InterPro" id="IPR032442">
    <property type="entry name" value="CTU1_C"/>
</dbReference>
<dbReference type="InterPro" id="IPR000541">
    <property type="entry name" value="Ncs6/Tuc1/Ctu1"/>
</dbReference>
<dbReference type="InterPro" id="IPR014729">
    <property type="entry name" value="Rossmann-like_a/b/a_fold"/>
</dbReference>
<dbReference type="InterPro" id="IPR011063">
    <property type="entry name" value="TilS/TtcA_N"/>
</dbReference>
<dbReference type="InterPro" id="IPR035107">
    <property type="entry name" value="tRNA_thiolation_TtcA_Ctu1"/>
</dbReference>
<dbReference type="InterPro" id="IPR054306">
    <property type="entry name" value="TtuA-like_LIM_N"/>
</dbReference>
<dbReference type="InterPro" id="IPR020554">
    <property type="entry name" value="UPF0021_CS"/>
</dbReference>
<dbReference type="NCBIfam" id="TIGR00269">
    <property type="entry name" value="TIGR00269 family protein"/>
    <property type="match status" value="1"/>
</dbReference>
<dbReference type="PANTHER" id="PTHR11807">
    <property type="entry name" value="ATPASES OF THE PP SUPERFAMILY-RELATED"/>
    <property type="match status" value="1"/>
</dbReference>
<dbReference type="PANTHER" id="PTHR11807:SF12">
    <property type="entry name" value="CYTOPLASMIC TRNA 2-THIOLATION PROTEIN 1"/>
    <property type="match status" value="1"/>
</dbReference>
<dbReference type="Pfam" id="PF01171">
    <property type="entry name" value="ATP_bind_3"/>
    <property type="match status" value="1"/>
</dbReference>
<dbReference type="Pfam" id="PF22082">
    <property type="entry name" value="TtuA_LIM_N"/>
    <property type="match status" value="1"/>
</dbReference>
<dbReference type="Pfam" id="PF16503">
    <property type="entry name" value="zn-ribbon_14"/>
    <property type="match status" value="1"/>
</dbReference>
<dbReference type="PIRSF" id="PIRSF004976">
    <property type="entry name" value="ATPase_YdaO"/>
    <property type="match status" value="1"/>
</dbReference>
<dbReference type="SUPFAM" id="SSF52402">
    <property type="entry name" value="Adenine nucleotide alpha hydrolases-like"/>
    <property type="match status" value="1"/>
</dbReference>
<dbReference type="PROSITE" id="PS01263">
    <property type="entry name" value="UPF0021"/>
    <property type="match status" value="1"/>
</dbReference>
<name>CTU1_DROYA</name>
<comment type="function">
    <text evidence="1">Plays a central role in 2-thiolation of mcm(5)S(2)U at tRNA wobble positions of tRNA(Lys), tRNA(Glu) and tRNA(Gln). Directly binds tRNAs and probably acts by catalyzing adenylation of tRNAs, an intermediate required for 2-thiolation. It is unclear whether it acts as a sulfurtransferase that transfers sulfur from thiocarboxylated URM1 onto the uridine of tRNAs at wobble position.</text>
</comment>
<comment type="pathway">
    <text evidence="1">tRNA modification; 5-methoxycarbonylmethyl-2-thiouridine-tRNA biosynthesis.</text>
</comment>
<comment type="subcellular location">
    <subcellularLocation>
        <location evidence="1">Cytoplasm</location>
    </subcellularLocation>
</comment>
<comment type="similarity">
    <text evidence="1">Belongs to the TtcA family. CTU1/NCS6/ATPBD3 subfamily.</text>
</comment>
<feature type="chain" id="PRO_0000368252" description="Cytoplasmic tRNA 2-thiolation protein 1">
    <location>
        <begin position="1"/>
        <end position="343"/>
    </location>
</feature>
<evidence type="ECO:0000255" key="1">
    <source>
        <dbReference type="HAMAP-Rule" id="MF_03053"/>
    </source>
</evidence>
<organism>
    <name type="scientific">Drosophila yakuba</name>
    <name type="common">Fruit fly</name>
    <dbReference type="NCBI Taxonomy" id="7245"/>
    <lineage>
        <taxon>Eukaryota</taxon>
        <taxon>Metazoa</taxon>
        <taxon>Ecdysozoa</taxon>
        <taxon>Arthropoda</taxon>
        <taxon>Hexapoda</taxon>
        <taxon>Insecta</taxon>
        <taxon>Pterygota</taxon>
        <taxon>Neoptera</taxon>
        <taxon>Endopterygota</taxon>
        <taxon>Diptera</taxon>
        <taxon>Brachycera</taxon>
        <taxon>Muscomorpha</taxon>
        <taxon>Ephydroidea</taxon>
        <taxon>Drosophilidae</taxon>
        <taxon>Drosophila</taxon>
        <taxon>Sophophora</taxon>
    </lineage>
</organism>
<gene>
    <name type="ORF">GE22576</name>
</gene>
<keyword id="KW-0963">Cytoplasm</keyword>
<keyword id="KW-0694">RNA-binding</keyword>
<keyword id="KW-0808">Transferase</keyword>
<keyword id="KW-0819">tRNA processing</keyword>
<keyword id="KW-0820">tRNA-binding</keyword>
<sequence>MPISCKSQCGNRAVLKRPKTGDALCKECFFAAFEAEIHHTISSSNLFRLGEKVAVAASGGKDSTVLAHVLKLLNERHNYGLELVLLSIDEGITGYRDDSLETVKQNRDDYQMPLKILSYEELYGWTMDRIVAQIGRSNNCTFCGVFRRQALDRGAKLLGVDSIATGHNADDIAETVLMNVLRGDTARLRRCTSIRTGGGEDTIPRVKPLKYSYEKEIVMYAHYKKLVYFSTECVFAPNAYRGHARAFLKDLEKVRPSVIMDIIYSGEQLRFKDTVKKPERGTCIRCGFVSSQQPCKACVLLEGLNRGLPKLGIGKKSKGERMIAKQDQELALRERAHLVKNDF</sequence>